<feature type="chain" id="PRO_0000294504" description="UPF0457 protein SAOUHSC_02425">
    <location>
        <begin position="1"/>
        <end position="86"/>
    </location>
</feature>
<protein>
    <recommendedName>
        <fullName>UPF0457 protein SAOUHSC_02425</fullName>
    </recommendedName>
</protein>
<evidence type="ECO:0000305" key="1"/>
<accession>Q2FW79</accession>
<keyword id="KW-1185">Reference proteome</keyword>
<sequence length="86" mass="10006">MAMTVKKDNNEVRIQWRVADIKIPTSEIKNITQDQDIHAVPKLDSKDVSRIGSTFGKTNRVIIDTEDHEYIIYTQNDQKVYNELTK</sequence>
<comment type="similarity">
    <text evidence="1">Belongs to the UPF0457 family.</text>
</comment>
<reference key="1">
    <citation type="book" date="2006" name="Gram positive pathogens, 2nd edition">
        <title>The Staphylococcus aureus NCTC 8325 genome.</title>
        <editorList>
            <person name="Fischetti V."/>
            <person name="Novick R."/>
            <person name="Ferretti J."/>
            <person name="Portnoy D."/>
            <person name="Rood J."/>
        </editorList>
        <authorList>
            <person name="Gillaspy A.F."/>
            <person name="Worrell V."/>
            <person name="Orvis J."/>
            <person name="Roe B.A."/>
            <person name="Dyer D.W."/>
            <person name="Iandolo J.J."/>
        </authorList>
    </citation>
    <scope>NUCLEOTIDE SEQUENCE [LARGE SCALE GENOMIC DNA]</scope>
    <source>
        <strain>NCTC 8325 / PS 47</strain>
    </source>
</reference>
<dbReference type="EMBL" id="CP000253">
    <property type="protein sequence ID" value="ABD31449.1"/>
    <property type="molecule type" value="Genomic_DNA"/>
</dbReference>
<dbReference type="RefSeq" id="WP_001251935.1">
    <property type="nucleotide sequence ID" value="NZ_LS483365.1"/>
</dbReference>
<dbReference type="RefSeq" id="YP_500896.1">
    <property type="nucleotide sequence ID" value="NC_007795.1"/>
</dbReference>
<dbReference type="SMR" id="Q2FW79"/>
<dbReference type="STRING" id="93061.SAOUHSC_02425"/>
<dbReference type="PaxDb" id="1280-SAXN108_2420"/>
<dbReference type="GeneID" id="3919635"/>
<dbReference type="KEGG" id="sao:SAOUHSC_02425"/>
<dbReference type="PATRIC" id="fig|93061.5.peg.2189"/>
<dbReference type="eggNOG" id="ENOG50332PH">
    <property type="taxonomic scope" value="Bacteria"/>
</dbReference>
<dbReference type="HOGENOM" id="CLU_174851_0_0_9"/>
<dbReference type="OrthoDB" id="2397384at2"/>
<dbReference type="PRO" id="PR:Q2FW79"/>
<dbReference type="Proteomes" id="UP000008816">
    <property type="component" value="Chromosome"/>
</dbReference>
<dbReference type="InterPro" id="IPR055365">
    <property type="entry name" value="PH_SunI-like"/>
</dbReference>
<dbReference type="Pfam" id="PF23491">
    <property type="entry name" value="bPH_8"/>
    <property type="match status" value="1"/>
</dbReference>
<organism>
    <name type="scientific">Staphylococcus aureus (strain NCTC 8325 / PS 47)</name>
    <dbReference type="NCBI Taxonomy" id="93061"/>
    <lineage>
        <taxon>Bacteria</taxon>
        <taxon>Bacillati</taxon>
        <taxon>Bacillota</taxon>
        <taxon>Bacilli</taxon>
        <taxon>Bacillales</taxon>
        <taxon>Staphylococcaceae</taxon>
        <taxon>Staphylococcus</taxon>
    </lineage>
</organism>
<name>Y2425_STAA8</name>
<proteinExistence type="inferred from homology"/>
<gene>
    <name type="ordered locus">SAOUHSC_02425</name>
</gene>